<proteinExistence type="inferred from homology"/>
<name>LEUC_BURA4</name>
<accession>B1Z1N0</accession>
<keyword id="KW-0004">4Fe-4S</keyword>
<keyword id="KW-0028">Amino-acid biosynthesis</keyword>
<keyword id="KW-0100">Branched-chain amino acid biosynthesis</keyword>
<keyword id="KW-0408">Iron</keyword>
<keyword id="KW-0411">Iron-sulfur</keyword>
<keyword id="KW-0432">Leucine biosynthesis</keyword>
<keyword id="KW-0456">Lyase</keyword>
<keyword id="KW-0479">Metal-binding</keyword>
<comment type="function">
    <text evidence="1">Catalyzes the isomerization between 2-isopropylmalate and 3-isopropylmalate, via the formation of 2-isopropylmaleate.</text>
</comment>
<comment type="catalytic activity">
    <reaction evidence="1">
        <text>(2R,3S)-3-isopropylmalate = (2S)-2-isopropylmalate</text>
        <dbReference type="Rhea" id="RHEA:32287"/>
        <dbReference type="ChEBI" id="CHEBI:1178"/>
        <dbReference type="ChEBI" id="CHEBI:35121"/>
        <dbReference type="EC" id="4.2.1.33"/>
    </reaction>
</comment>
<comment type="cofactor">
    <cofactor evidence="1">
        <name>[4Fe-4S] cluster</name>
        <dbReference type="ChEBI" id="CHEBI:49883"/>
    </cofactor>
    <text evidence="1">Binds 1 [4Fe-4S] cluster per subunit.</text>
</comment>
<comment type="pathway">
    <text evidence="1">Amino-acid biosynthesis; L-leucine biosynthesis; L-leucine from 3-methyl-2-oxobutanoate: step 2/4.</text>
</comment>
<comment type="subunit">
    <text evidence="1">Heterodimer of LeuC and LeuD.</text>
</comment>
<comment type="similarity">
    <text evidence="1">Belongs to the aconitase/IPM isomerase family. LeuC type 1 subfamily.</text>
</comment>
<sequence length="469" mass="50722">MAQTLYDKLWNTHVVHTEDDGTALLYIDRQLLHEVTSPQAFEGLNVAHRPVWRISANLAVSDHNVPTTDRSHGIADPVSKLQVDTLDANCDAFGITQFKMNDVRQGIVHIIGPEQGATLPGMTIVCGDSHTSTHGAFGALAHGIGTSEVEHVLATQTLLQKKSKNMLVKVEGALPRGCTAKDIVLAIIGRIGTAGGTGYAIEFGGSTIRALTMEGRMTVCNMAIEAGARAGMVAVDDTTIDYLKGRPFVPTGAEWDQAVEYWREFKSDEGAQFDRVVELNAAEIVPQVTWGTSPEMVTSIDGRVPDPEREKDPVKRDAMERALAYMALEPNTPMESIKVDKIFIGSCTNARIEDIRAAAYVVKKLNRRIASNVRLAMVVPGSGLVKAQAEREGLDKVFTDAGFEWREPGCSMCLAMNADRLDPGERCASTSNRNFEGRQGAGGRTHLVSPAMAAAAAIEGHFVDIRQLG</sequence>
<protein>
    <recommendedName>
        <fullName evidence="1">3-isopropylmalate dehydratase large subunit</fullName>
        <ecNumber evidence="1">4.2.1.33</ecNumber>
    </recommendedName>
    <alternativeName>
        <fullName evidence="1">Alpha-IPM isomerase</fullName>
        <shortName evidence="1">IPMI</shortName>
    </alternativeName>
    <alternativeName>
        <fullName evidence="1">Isopropylmalate isomerase</fullName>
    </alternativeName>
</protein>
<feature type="chain" id="PRO_1000135673" description="3-isopropylmalate dehydratase large subunit">
    <location>
        <begin position="1"/>
        <end position="469"/>
    </location>
</feature>
<feature type="binding site" evidence="1">
    <location>
        <position position="347"/>
    </location>
    <ligand>
        <name>[4Fe-4S] cluster</name>
        <dbReference type="ChEBI" id="CHEBI:49883"/>
    </ligand>
</feature>
<feature type="binding site" evidence="1">
    <location>
        <position position="410"/>
    </location>
    <ligand>
        <name>[4Fe-4S] cluster</name>
        <dbReference type="ChEBI" id="CHEBI:49883"/>
    </ligand>
</feature>
<feature type="binding site" evidence="1">
    <location>
        <position position="413"/>
    </location>
    <ligand>
        <name>[4Fe-4S] cluster</name>
        <dbReference type="ChEBI" id="CHEBI:49883"/>
    </ligand>
</feature>
<reference key="1">
    <citation type="submission" date="2008-04" db="EMBL/GenBank/DDBJ databases">
        <title>Complete sequence of chromosome 2 of Burkholderia ambifaria MC40-6.</title>
        <authorList>
            <person name="Copeland A."/>
            <person name="Lucas S."/>
            <person name="Lapidus A."/>
            <person name="Glavina del Rio T."/>
            <person name="Dalin E."/>
            <person name="Tice H."/>
            <person name="Pitluck S."/>
            <person name="Chain P."/>
            <person name="Malfatti S."/>
            <person name="Shin M."/>
            <person name="Vergez L."/>
            <person name="Lang D."/>
            <person name="Schmutz J."/>
            <person name="Larimer F."/>
            <person name="Land M."/>
            <person name="Hauser L."/>
            <person name="Kyrpides N."/>
            <person name="Lykidis A."/>
            <person name="Ramette A."/>
            <person name="Konstantinidis K."/>
            <person name="Tiedje J."/>
            <person name="Richardson P."/>
        </authorList>
    </citation>
    <scope>NUCLEOTIDE SEQUENCE [LARGE SCALE GENOMIC DNA]</scope>
    <source>
        <strain>MC40-6</strain>
    </source>
</reference>
<dbReference type="EC" id="4.2.1.33" evidence="1"/>
<dbReference type="EMBL" id="CP001026">
    <property type="protein sequence ID" value="ACB66311.1"/>
    <property type="molecule type" value="Genomic_DNA"/>
</dbReference>
<dbReference type="RefSeq" id="WP_011658378.1">
    <property type="nucleotide sequence ID" value="NC_010552.1"/>
</dbReference>
<dbReference type="SMR" id="B1Z1N0"/>
<dbReference type="GeneID" id="93086348"/>
<dbReference type="KEGG" id="bac:BamMC406_3844"/>
<dbReference type="HOGENOM" id="CLU_006714_3_4_4"/>
<dbReference type="OrthoDB" id="9802769at2"/>
<dbReference type="UniPathway" id="UPA00048">
    <property type="reaction ID" value="UER00071"/>
</dbReference>
<dbReference type="Proteomes" id="UP000001680">
    <property type="component" value="Chromosome 2"/>
</dbReference>
<dbReference type="GO" id="GO:0003861">
    <property type="term" value="F:3-isopropylmalate dehydratase activity"/>
    <property type="evidence" value="ECO:0007669"/>
    <property type="project" value="UniProtKB-UniRule"/>
</dbReference>
<dbReference type="GO" id="GO:0051539">
    <property type="term" value="F:4 iron, 4 sulfur cluster binding"/>
    <property type="evidence" value="ECO:0007669"/>
    <property type="project" value="UniProtKB-KW"/>
</dbReference>
<dbReference type="GO" id="GO:0046872">
    <property type="term" value="F:metal ion binding"/>
    <property type="evidence" value="ECO:0007669"/>
    <property type="project" value="UniProtKB-KW"/>
</dbReference>
<dbReference type="GO" id="GO:0009098">
    <property type="term" value="P:L-leucine biosynthetic process"/>
    <property type="evidence" value="ECO:0007669"/>
    <property type="project" value="UniProtKB-UniRule"/>
</dbReference>
<dbReference type="CDD" id="cd01583">
    <property type="entry name" value="IPMI"/>
    <property type="match status" value="1"/>
</dbReference>
<dbReference type="FunFam" id="3.30.499.10:FF:000007">
    <property type="entry name" value="3-isopropylmalate dehydratase large subunit"/>
    <property type="match status" value="1"/>
</dbReference>
<dbReference type="Gene3D" id="3.30.499.10">
    <property type="entry name" value="Aconitase, domain 3"/>
    <property type="match status" value="2"/>
</dbReference>
<dbReference type="HAMAP" id="MF_01026">
    <property type="entry name" value="LeuC_type1"/>
    <property type="match status" value="1"/>
</dbReference>
<dbReference type="InterPro" id="IPR004430">
    <property type="entry name" value="3-IsopropMal_deHydase_lsu"/>
</dbReference>
<dbReference type="InterPro" id="IPR015931">
    <property type="entry name" value="Acnase/IPM_dHydase_lsu_aba_1/3"/>
</dbReference>
<dbReference type="InterPro" id="IPR001030">
    <property type="entry name" value="Acoase/IPM_deHydtase_lsu_aba"/>
</dbReference>
<dbReference type="InterPro" id="IPR018136">
    <property type="entry name" value="Aconitase_4Fe-4S_BS"/>
</dbReference>
<dbReference type="InterPro" id="IPR036008">
    <property type="entry name" value="Aconitase_4Fe-4S_dom"/>
</dbReference>
<dbReference type="InterPro" id="IPR050067">
    <property type="entry name" value="IPM_dehydratase_rel_enz"/>
</dbReference>
<dbReference type="InterPro" id="IPR033941">
    <property type="entry name" value="IPMI_cat"/>
</dbReference>
<dbReference type="NCBIfam" id="TIGR00170">
    <property type="entry name" value="leuC"/>
    <property type="match status" value="1"/>
</dbReference>
<dbReference type="NCBIfam" id="NF004016">
    <property type="entry name" value="PRK05478.1"/>
    <property type="match status" value="1"/>
</dbReference>
<dbReference type="NCBIfam" id="NF009116">
    <property type="entry name" value="PRK12466.1"/>
    <property type="match status" value="1"/>
</dbReference>
<dbReference type="PANTHER" id="PTHR43822:SF9">
    <property type="entry name" value="3-ISOPROPYLMALATE DEHYDRATASE"/>
    <property type="match status" value="1"/>
</dbReference>
<dbReference type="PANTHER" id="PTHR43822">
    <property type="entry name" value="HOMOACONITASE, MITOCHONDRIAL-RELATED"/>
    <property type="match status" value="1"/>
</dbReference>
<dbReference type="Pfam" id="PF00330">
    <property type="entry name" value="Aconitase"/>
    <property type="match status" value="1"/>
</dbReference>
<dbReference type="PRINTS" id="PR00415">
    <property type="entry name" value="ACONITASE"/>
</dbReference>
<dbReference type="SUPFAM" id="SSF53732">
    <property type="entry name" value="Aconitase iron-sulfur domain"/>
    <property type="match status" value="1"/>
</dbReference>
<dbReference type="PROSITE" id="PS00450">
    <property type="entry name" value="ACONITASE_1"/>
    <property type="match status" value="1"/>
</dbReference>
<dbReference type="PROSITE" id="PS01244">
    <property type="entry name" value="ACONITASE_2"/>
    <property type="match status" value="1"/>
</dbReference>
<evidence type="ECO:0000255" key="1">
    <source>
        <dbReference type="HAMAP-Rule" id="MF_01026"/>
    </source>
</evidence>
<organism>
    <name type="scientific">Burkholderia ambifaria (strain MC40-6)</name>
    <dbReference type="NCBI Taxonomy" id="398577"/>
    <lineage>
        <taxon>Bacteria</taxon>
        <taxon>Pseudomonadati</taxon>
        <taxon>Pseudomonadota</taxon>
        <taxon>Betaproteobacteria</taxon>
        <taxon>Burkholderiales</taxon>
        <taxon>Burkholderiaceae</taxon>
        <taxon>Burkholderia</taxon>
        <taxon>Burkholderia cepacia complex</taxon>
    </lineage>
</organism>
<gene>
    <name evidence="1" type="primary">leuC</name>
    <name type="ordered locus">BamMC406_3844</name>
</gene>